<gene>
    <name evidence="1" type="primary">ureG</name>
    <name type="ordered locus">PMT_2230</name>
</gene>
<feature type="chain" id="PRO_1000145202" description="Urease accessory protein UreG">
    <location>
        <begin position="1"/>
        <end position="202"/>
    </location>
</feature>
<feature type="binding site" evidence="1">
    <location>
        <begin position="11"/>
        <end position="18"/>
    </location>
    <ligand>
        <name>GTP</name>
        <dbReference type="ChEBI" id="CHEBI:37565"/>
    </ligand>
</feature>
<proteinExistence type="inferred from homology"/>
<name>UREG_PROMM</name>
<comment type="function">
    <text evidence="1">Facilitates the functional incorporation of the urease nickel metallocenter. This process requires GTP hydrolysis, probably effectuated by UreG.</text>
</comment>
<comment type="subunit">
    <text evidence="1">Homodimer. UreD, UreF and UreG form a complex that acts as a GTP-hydrolysis-dependent molecular chaperone, activating the urease apoprotein by helping to assemble the nickel containing metallocenter of UreC. The UreE protein probably delivers the nickel.</text>
</comment>
<comment type="subcellular location">
    <subcellularLocation>
        <location evidence="1">Cytoplasm</location>
    </subcellularLocation>
</comment>
<comment type="similarity">
    <text evidence="1">Belongs to the SIMIBI class G3E GTPase family. UreG subfamily.</text>
</comment>
<evidence type="ECO:0000255" key="1">
    <source>
        <dbReference type="HAMAP-Rule" id="MF_01389"/>
    </source>
</evidence>
<organism>
    <name type="scientific">Prochlorococcus marinus (strain MIT 9313)</name>
    <dbReference type="NCBI Taxonomy" id="74547"/>
    <lineage>
        <taxon>Bacteria</taxon>
        <taxon>Bacillati</taxon>
        <taxon>Cyanobacteriota</taxon>
        <taxon>Cyanophyceae</taxon>
        <taxon>Synechococcales</taxon>
        <taxon>Prochlorococcaceae</taxon>
        <taxon>Prochlorococcus</taxon>
    </lineage>
</organism>
<keyword id="KW-0143">Chaperone</keyword>
<keyword id="KW-0963">Cytoplasm</keyword>
<keyword id="KW-0342">GTP-binding</keyword>
<keyword id="KW-0996">Nickel insertion</keyword>
<keyword id="KW-0547">Nucleotide-binding</keyword>
<keyword id="KW-1185">Reference proteome</keyword>
<reference key="1">
    <citation type="journal article" date="2003" name="Nature">
        <title>Genome divergence in two Prochlorococcus ecotypes reflects oceanic niche differentiation.</title>
        <authorList>
            <person name="Rocap G."/>
            <person name="Larimer F.W."/>
            <person name="Lamerdin J.E."/>
            <person name="Malfatti S."/>
            <person name="Chain P."/>
            <person name="Ahlgren N.A."/>
            <person name="Arellano A."/>
            <person name="Coleman M."/>
            <person name="Hauser L."/>
            <person name="Hess W.R."/>
            <person name="Johnson Z.I."/>
            <person name="Land M.L."/>
            <person name="Lindell D."/>
            <person name="Post A.F."/>
            <person name="Regala W."/>
            <person name="Shah M."/>
            <person name="Shaw S.L."/>
            <person name="Steglich C."/>
            <person name="Sullivan M.B."/>
            <person name="Ting C.S."/>
            <person name="Tolonen A."/>
            <person name="Webb E.A."/>
            <person name="Zinser E.R."/>
            <person name="Chisholm S.W."/>
        </authorList>
    </citation>
    <scope>NUCLEOTIDE SEQUENCE [LARGE SCALE GENOMIC DNA]</scope>
    <source>
        <strain>MIT 9313</strain>
    </source>
</reference>
<sequence length="202" mass="22064">MSSKLRLGVAGPVGSGKTALVEAMCRRLRDQLQLAVVTNDIYTQEDAEFLTRVGALEPERIRGVETGGCPHTAIREDCSINRAAVEDLERNFPDLDVVLVESGGDNLAASFSPELVDLCIYVIDVAAGDKIPRKGGPGITRSDLLVINKIDLAVHVGADLEVMKRDTTRMRGERPWCFTNLRSGDGLESVLHFLLQQLPNRP</sequence>
<protein>
    <recommendedName>
        <fullName evidence="1">Urease accessory protein UreG</fullName>
    </recommendedName>
</protein>
<accession>Q7V3V8</accession>
<dbReference type="EMBL" id="BX548175">
    <property type="protein sequence ID" value="CAE22404.1"/>
    <property type="molecule type" value="Genomic_DNA"/>
</dbReference>
<dbReference type="RefSeq" id="WP_011131594.1">
    <property type="nucleotide sequence ID" value="NC_005071.1"/>
</dbReference>
<dbReference type="SMR" id="Q7V3V8"/>
<dbReference type="KEGG" id="pmt:PMT_2230"/>
<dbReference type="eggNOG" id="COG0378">
    <property type="taxonomic scope" value="Bacteria"/>
</dbReference>
<dbReference type="HOGENOM" id="CLU_072144_1_0_3"/>
<dbReference type="OrthoDB" id="9802035at2"/>
<dbReference type="Proteomes" id="UP000001423">
    <property type="component" value="Chromosome"/>
</dbReference>
<dbReference type="GO" id="GO:0005737">
    <property type="term" value="C:cytoplasm"/>
    <property type="evidence" value="ECO:0007669"/>
    <property type="project" value="UniProtKB-SubCell"/>
</dbReference>
<dbReference type="GO" id="GO:0005525">
    <property type="term" value="F:GTP binding"/>
    <property type="evidence" value="ECO:0007669"/>
    <property type="project" value="UniProtKB-KW"/>
</dbReference>
<dbReference type="GO" id="GO:0003924">
    <property type="term" value="F:GTPase activity"/>
    <property type="evidence" value="ECO:0007669"/>
    <property type="project" value="InterPro"/>
</dbReference>
<dbReference type="GO" id="GO:0016151">
    <property type="term" value="F:nickel cation binding"/>
    <property type="evidence" value="ECO:0007669"/>
    <property type="project" value="UniProtKB-UniRule"/>
</dbReference>
<dbReference type="GO" id="GO:0043419">
    <property type="term" value="P:urea catabolic process"/>
    <property type="evidence" value="ECO:0007669"/>
    <property type="project" value="InterPro"/>
</dbReference>
<dbReference type="CDD" id="cd05540">
    <property type="entry name" value="UreG"/>
    <property type="match status" value="1"/>
</dbReference>
<dbReference type="FunFam" id="3.40.50.300:FF:000208">
    <property type="entry name" value="Urease accessory protein UreG"/>
    <property type="match status" value="1"/>
</dbReference>
<dbReference type="Gene3D" id="3.40.50.300">
    <property type="entry name" value="P-loop containing nucleotide triphosphate hydrolases"/>
    <property type="match status" value="1"/>
</dbReference>
<dbReference type="HAMAP" id="MF_01389">
    <property type="entry name" value="UreG"/>
    <property type="match status" value="1"/>
</dbReference>
<dbReference type="InterPro" id="IPR003495">
    <property type="entry name" value="CobW/HypB/UreG_nucleotide-bd"/>
</dbReference>
<dbReference type="InterPro" id="IPR027417">
    <property type="entry name" value="P-loop_NTPase"/>
</dbReference>
<dbReference type="InterPro" id="IPR004400">
    <property type="entry name" value="UreG"/>
</dbReference>
<dbReference type="NCBIfam" id="TIGR00101">
    <property type="entry name" value="ureG"/>
    <property type="match status" value="1"/>
</dbReference>
<dbReference type="PANTHER" id="PTHR31715">
    <property type="entry name" value="UREASE ACCESSORY PROTEIN G"/>
    <property type="match status" value="1"/>
</dbReference>
<dbReference type="PANTHER" id="PTHR31715:SF0">
    <property type="entry name" value="UREASE ACCESSORY PROTEIN G"/>
    <property type="match status" value="1"/>
</dbReference>
<dbReference type="Pfam" id="PF02492">
    <property type="entry name" value="cobW"/>
    <property type="match status" value="1"/>
</dbReference>
<dbReference type="PIRSF" id="PIRSF005624">
    <property type="entry name" value="Ni-bind_GTPase"/>
    <property type="match status" value="1"/>
</dbReference>
<dbReference type="SUPFAM" id="SSF52540">
    <property type="entry name" value="P-loop containing nucleoside triphosphate hydrolases"/>
    <property type="match status" value="1"/>
</dbReference>